<protein>
    <recommendedName>
        <fullName>Odorant receptor 10a</fullName>
    </recommendedName>
</protein>
<gene>
    <name type="primary">Or10a</name>
    <name type="ORF">CG17867</name>
</gene>
<accession>Q9VYZ1</accession>
<evidence type="ECO:0000250" key="1"/>
<evidence type="ECO:0000255" key="2"/>
<evidence type="ECO:0000269" key="3">
    <source>
    </source>
</evidence>
<evidence type="ECO:0000269" key="4">
    <source>
    </source>
</evidence>
<evidence type="ECO:0000269" key="5">
    <source>
    </source>
</evidence>
<evidence type="ECO:0000269" key="6">
    <source>
    </source>
</evidence>
<evidence type="ECO:0000305" key="7"/>
<keyword id="KW-1003">Cell membrane</keyword>
<keyword id="KW-0325">Glycoprotein</keyword>
<keyword id="KW-0472">Membrane</keyword>
<keyword id="KW-0552">Olfaction</keyword>
<keyword id="KW-0675">Receptor</keyword>
<keyword id="KW-1185">Reference proteome</keyword>
<keyword id="KW-0716">Sensory transduction</keyword>
<keyword id="KW-0807">Transducer</keyword>
<keyword id="KW-0812">Transmembrane</keyword>
<keyword id="KW-1133">Transmembrane helix</keyword>
<dbReference type="EMBL" id="AE014298">
    <property type="protein sequence ID" value="AAF48042.1"/>
    <property type="molecule type" value="Genomic_DNA"/>
</dbReference>
<dbReference type="RefSeq" id="NP_511122.1">
    <property type="nucleotide sequence ID" value="NM_078567.5"/>
</dbReference>
<dbReference type="SMR" id="Q9VYZ1"/>
<dbReference type="FunCoup" id="Q9VYZ1">
    <property type="interactions" value="34"/>
</dbReference>
<dbReference type="STRING" id="7227.FBpp0312370"/>
<dbReference type="GlyCosmos" id="Q9VYZ1">
    <property type="glycosylation" value="1 site, No reported glycans"/>
</dbReference>
<dbReference type="GlyGen" id="Q9VYZ1">
    <property type="glycosylation" value="1 site"/>
</dbReference>
<dbReference type="PaxDb" id="7227-FBpp0073393"/>
<dbReference type="DNASU" id="32086"/>
<dbReference type="EnsemblMetazoa" id="FBtr0346792">
    <property type="protein sequence ID" value="FBpp0312370"/>
    <property type="gene ID" value="FBgn0030298"/>
</dbReference>
<dbReference type="GeneID" id="32086"/>
<dbReference type="KEGG" id="dme:Dmel_CG17867"/>
<dbReference type="AGR" id="FB:FBgn0030298"/>
<dbReference type="CTD" id="32086"/>
<dbReference type="FlyBase" id="FBgn0030298">
    <property type="gene designation" value="Or10a"/>
</dbReference>
<dbReference type="VEuPathDB" id="VectorBase:FBgn0030298"/>
<dbReference type="eggNOG" id="ENOG502T1BY">
    <property type="taxonomic scope" value="Eukaryota"/>
</dbReference>
<dbReference type="GeneTree" id="ENSGT00940000166470"/>
<dbReference type="HOGENOM" id="CLU_033399_7_0_1"/>
<dbReference type="InParanoid" id="Q9VYZ1"/>
<dbReference type="OMA" id="GFYFEFC"/>
<dbReference type="OrthoDB" id="8185860at2759"/>
<dbReference type="PhylomeDB" id="Q9VYZ1"/>
<dbReference type="BioGRID-ORCS" id="32086">
    <property type="hits" value="0 hits in 1 CRISPR screen"/>
</dbReference>
<dbReference type="GenomeRNAi" id="32086"/>
<dbReference type="PRO" id="PR:Q9VYZ1"/>
<dbReference type="Proteomes" id="UP000000803">
    <property type="component" value="Chromosome X"/>
</dbReference>
<dbReference type="Bgee" id="FBgn0030298">
    <property type="expression patterns" value="Expressed in adult olfactory receptor neuron Or10a (Drosophila) and 1 other cell type or tissue"/>
</dbReference>
<dbReference type="GO" id="GO:0032590">
    <property type="term" value="C:dendrite membrane"/>
    <property type="evidence" value="ECO:0000250"/>
    <property type="project" value="FlyBase"/>
</dbReference>
<dbReference type="GO" id="GO:0005886">
    <property type="term" value="C:plasma membrane"/>
    <property type="evidence" value="ECO:0007005"/>
    <property type="project" value="FlyBase"/>
</dbReference>
<dbReference type="GO" id="GO:0170020">
    <property type="term" value="F:ionotropic olfactory receptor activity"/>
    <property type="evidence" value="ECO:0000314"/>
    <property type="project" value="FlyBase"/>
</dbReference>
<dbReference type="GO" id="GO:0099604">
    <property type="term" value="F:ligand-gated calcium channel activity"/>
    <property type="evidence" value="ECO:0000314"/>
    <property type="project" value="FlyBase"/>
</dbReference>
<dbReference type="GO" id="GO:0099094">
    <property type="term" value="F:ligand-gated monoatomic cation channel activity"/>
    <property type="evidence" value="ECO:0000314"/>
    <property type="project" value="FlyBase"/>
</dbReference>
<dbReference type="GO" id="GO:0005549">
    <property type="term" value="F:odorant binding"/>
    <property type="evidence" value="ECO:0000250"/>
    <property type="project" value="FlyBase"/>
</dbReference>
<dbReference type="GO" id="GO:0004984">
    <property type="term" value="F:olfactory receptor activity"/>
    <property type="evidence" value="ECO:0000318"/>
    <property type="project" value="GO_Central"/>
</dbReference>
<dbReference type="GO" id="GO:0070588">
    <property type="term" value="P:calcium ion transmembrane transport"/>
    <property type="evidence" value="ECO:0000314"/>
    <property type="project" value="FlyBase"/>
</dbReference>
<dbReference type="GO" id="GO:0050911">
    <property type="term" value="P:detection of chemical stimulus involved in sensory perception of smell"/>
    <property type="evidence" value="ECO:0000314"/>
    <property type="project" value="FlyBase"/>
</dbReference>
<dbReference type="GO" id="GO:0098655">
    <property type="term" value="P:monoatomic cation transmembrane transport"/>
    <property type="evidence" value="ECO:0000314"/>
    <property type="project" value="FlyBase"/>
</dbReference>
<dbReference type="InterPro" id="IPR004117">
    <property type="entry name" value="7tm6_olfct_rcpt"/>
</dbReference>
<dbReference type="PANTHER" id="PTHR21137">
    <property type="entry name" value="ODORANT RECEPTOR"/>
    <property type="match status" value="1"/>
</dbReference>
<dbReference type="PANTHER" id="PTHR21137:SF26">
    <property type="entry name" value="ODORANT RECEPTOR 10A-RELATED"/>
    <property type="match status" value="1"/>
</dbReference>
<dbReference type="Pfam" id="PF02949">
    <property type="entry name" value="7tm_6"/>
    <property type="match status" value="1"/>
</dbReference>
<sequence>MSEWLRFLKRDQQLDVYFFAVPRLSLDIMGYWPGKTGDTWPWRSLIHFAILAIGVATELHAGMCFLDRQQITLALETLCPAGTSAVTLLKMFLMLRFRQDLSIMWNRLRGLLFDPNWERPEQRDIRLKHSAMAARINFWPLSAGFFTCTTYNLKPILIAMILYLQNRYEDFVWFTPFNMTMPKVLLNYPFFPLTYIFIAYTGYVTIFMFGGCDGFYFEFCAHLSALFEVLQAEIESMFRPYTDHLELSPVQLYILEQKMRSVIIRHNAIIDLTRFFRDRYTIITLAHFVSAAMVIGFSMVNLLTLGNNGLGAMLYVAYTVAALSQLLVYCYGGTLVAESSTGLCRAMFSCPWQLFKPKQRRLVQLLILRSQRPVSMAVPFFSPSLATFAAILQTSGSIIALVKSFQ</sequence>
<comment type="function">
    <text evidence="4 5 6">Odorant receptor which mediates acceptance or avoidance behavior, depending on its substrates. The odorant receptor repertoire encodes a large collection of odor stimuli that vary widely in identity, intensity, and duration. May form a complex with Orco to form odorant-sensing units, providing sensitive and prolonged odorant signaling and calcium permeability. Involved in the behavioral responses to esters, and specifically to ethyl hexanoate, benzaldehyde, and acetophenone.</text>
</comment>
<comment type="subunit">
    <text evidence="1">Interacts with Orco. Complexes exist early in the endomembrane system in olfactory sensory neurons (OSNs), coupling these complexes to the conserved ciliary trafficking pathway (By similarity).</text>
</comment>
<comment type="subcellular location">
    <subcellularLocation>
        <location evidence="1">Cell membrane</location>
        <topology evidence="1">Multi-pass membrane protein</topology>
    </subcellularLocation>
</comment>
<comment type="tissue specificity">
    <text evidence="3">Expressed in olfactory sensory neurons in the antenna.</text>
</comment>
<comment type="miscellaneous">
    <text>The atypical heteromeric and topological design of the odorant receptors appears to be an insect-specific solution for odor recognition, making the OR/Orco complex an attractive target for the development of highly selective insect repellents to disrupt olfactory-mediated host-seeking behaviors of insect disease vectors. Odor-evoked OR currents are independent of known G-protein-coupled second messenger pathways.</text>
</comment>
<comment type="similarity">
    <text evidence="7">Belongs to the insect chemoreceptor superfamily. Heteromeric odorant receptor channel (TC 1.A.69) family. Or1a subfamily.</text>
</comment>
<proteinExistence type="evidence at transcript level"/>
<organism>
    <name type="scientific">Drosophila melanogaster</name>
    <name type="common">Fruit fly</name>
    <dbReference type="NCBI Taxonomy" id="7227"/>
    <lineage>
        <taxon>Eukaryota</taxon>
        <taxon>Metazoa</taxon>
        <taxon>Ecdysozoa</taxon>
        <taxon>Arthropoda</taxon>
        <taxon>Hexapoda</taxon>
        <taxon>Insecta</taxon>
        <taxon>Pterygota</taxon>
        <taxon>Neoptera</taxon>
        <taxon>Endopterygota</taxon>
        <taxon>Diptera</taxon>
        <taxon>Brachycera</taxon>
        <taxon>Muscomorpha</taxon>
        <taxon>Ephydroidea</taxon>
        <taxon>Drosophilidae</taxon>
        <taxon>Drosophila</taxon>
        <taxon>Sophophora</taxon>
    </lineage>
</organism>
<reference key="1">
    <citation type="journal article" date="2000" name="Science">
        <title>The genome sequence of Drosophila melanogaster.</title>
        <authorList>
            <person name="Adams M.D."/>
            <person name="Celniker S.E."/>
            <person name="Holt R.A."/>
            <person name="Evans C.A."/>
            <person name="Gocayne J.D."/>
            <person name="Amanatides P.G."/>
            <person name="Scherer S.E."/>
            <person name="Li P.W."/>
            <person name="Hoskins R.A."/>
            <person name="Galle R.F."/>
            <person name="George R.A."/>
            <person name="Lewis S.E."/>
            <person name="Richards S."/>
            <person name="Ashburner M."/>
            <person name="Henderson S.N."/>
            <person name="Sutton G.G."/>
            <person name="Wortman J.R."/>
            <person name="Yandell M.D."/>
            <person name="Zhang Q."/>
            <person name="Chen L.X."/>
            <person name="Brandon R.C."/>
            <person name="Rogers Y.-H.C."/>
            <person name="Blazej R.G."/>
            <person name="Champe M."/>
            <person name="Pfeiffer B.D."/>
            <person name="Wan K.H."/>
            <person name="Doyle C."/>
            <person name="Baxter E.G."/>
            <person name="Helt G."/>
            <person name="Nelson C.R."/>
            <person name="Miklos G.L.G."/>
            <person name="Abril J.F."/>
            <person name="Agbayani A."/>
            <person name="An H.-J."/>
            <person name="Andrews-Pfannkoch C."/>
            <person name="Baldwin D."/>
            <person name="Ballew R.M."/>
            <person name="Basu A."/>
            <person name="Baxendale J."/>
            <person name="Bayraktaroglu L."/>
            <person name="Beasley E.M."/>
            <person name="Beeson K.Y."/>
            <person name="Benos P.V."/>
            <person name="Berman B.P."/>
            <person name="Bhandari D."/>
            <person name="Bolshakov S."/>
            <person name="Borkova D."/>
            <person name="Botchan M.R."/>
            <person name="Bouck J."/>
            <person name="Brokstein P."/>
            <person name="Brottier P."/>
            <person name="Burtis K.C."/>
            <person name="Busam D.A."/>
            <person name="Butler H."/>
            <person name="Cadieu E."/>
            <person name="Center A."/>
            <person name="Chandra I."/>
            <person name="Cherry J.M."/>
            <person name="Cawley S."/>
            <person name="Dahlke C."/>
            <person name="Davenport L.B."/>
            <person name="Davies P."/>
            <person name="de Pablos B."/>
            <person name="Delcher A."/>
            <person name="Deng Z."/>
            <person name="Mays A.D."/>
            <person name="Dew I."/>
            <person name="Dietz S.M."/>
            <person name="Dodson K."/>
            <person name="Doup L.E."/>
            <person name="Downes M."/>
            <person name="Dugan-Rocha S."/>
            <person name="Dunkov B.C."/>
            <person name="Dunn P."/>
            <person name="Durbin K.J."/>
            <person name="Evangelista C.C."/>
            <person name="Ferraz C."/>
            <person name="Ferriera S."/>
            <person name="Fleischmann W."/>
            <person name="Fosler C."/>
            <person name="Gabrielian A.E."/>
            <person name="Garg N.S."/>
            <person name="Gelbart W.M."/>
            <person name="Glasser K."/>
            <person name="Glodek A."/>
            <person name="Gong F."/>
            <person name="Gorrell J.H."/>
            <person name="Gu Z."/>
            <person name="Guan P."/>
            <person name="Harris M."/>
            <person name="Harris N.L."/>
            <person name="Harvey D.A."/>
            <person name="Heiman T.J."/>
            <person name="Hernandez J.R."/>
            <person name="Houck J."/>
            <person name="Hostin D."/>
            <person name="Houston K.A."/>
            <person name="Howland T.J."/>
            <person name="Wei M.-H."/>
            <person name="Ibegwam C."/>
            <person name="Jalali M."/>
            <person name="Kalush F."/>
            <person name="Karpen G.H."/>
            <person name="Ke Z."/>
            <person name="Kennison J.A."/>
            <person name="Ketchum K.A."/>
            <person name="Kimmel B.E."/>
            <person name="Kodira C.D."/>
            <person name="Kraft C.L."/>
            <person name="Kravitz S."/>
            <person name="Kulp D."/>
            <person name="Lai Z."/>
            <person name="Lasko P."/>
            <person name="Lei Y."/>
            <person name="Levitsky A.A."/>
            <person name="Li J.H."/>
            <person name="Li Z."/>
            <person name="Liang Y."/>
            <person name="Lin X."/>
            <person name="Liu X."/>
            <person name="Mattei B."/>
            <person name="McIntosh T.C."/>
            <person name="McLeod M.P."/>
            <person name="McPherson D."/>
            <person name="Merkulov G."/>
            <person name="Milshina N.V."/>
            <person name="Mobarry C."/>
            <person name="Morris J."/>
            <person name="Moshrefi A."/>
            <person name="Mount S.M."/>
            <person name="Moy M."/>
            <person name="Murphy B."/>
            <person name="Murphy L."/>
            <person name="Muzny D.M."/>
            <person name="Nelson D.L."/>
            <person name="Nelson D.R."/>
            <person name="Nelson K.A."/>
            <person name="Nixon K."/>
            <person name="Nusskern D.R."/>
            <person name="Pacleb J.M."/>
            <person name="Palazzolo M."/>
            <person name="Pittman G.S."/>
            <person name="Pan S."/>
            <person name="Pollard J."/>
            <person name="Puri V."/>
            <person name="Reese M.G."/>
            <person name="Reinert K."/>
            <person name="Remington K."/>
            <person name="Saunders R.D.C."/>
            <person name="Scheeler F."/>
            <person name="Shen H."/>
            <person name="Shue B.C."/>
            <person name="Siden-Kiamos I."/>
            <person name="Simpson M."/>
            <person name="Skupski M.P."/>
            <person name="Smith T.J."/>
            <person name="Spier E."/>
            <person name="Spradling A.C."/>
            <person name="Stapleton M."/>
            <person name="Strong R."/>
            <person name="Sun E."/>
            <person name="Svirskas R."/>
            <person name="Tector C."/>
            <person name="Turner R."/>
            <person name="Venter E."/>
            <person name="Wang A.H."/>
            <person name="Wang X."/>
            <person name="Wang Z.-Y."/>
            <person name="Wassarman D.A."/>
            <person name="Weinstock G.M."/>
            <person name="Weissenbach J."/>
            <person name="Williams S.M."/>
            <person name="Woodage T."/>
            <person name="Worley K.C."/>
            <person name="Wu D."/>
            <person name="Yang S."/>
            <person name="Yao Q.A."/>
            <person name="Ye J."/>
            <person name="Yeh R.-F."/>
            <person name="Zaveri J.S."/>
            <person name="Zhan M."/>
            <person name="Zhang G."/>
            <person name="Zhao Q."/>
            <person name="Zheng L."/>
            <person name="Zheng X.H."/>
            <person name="Zhong F.N."/>
            <person name="Zhong W."/>
            <person name="Zhou X."/>
            <person name="Zhu S.C."/>
            <person name="Zhu X."/>
            <person name="Smith H.O."/>
            <person name="Gibbs R.A."/>
            <person name="Myers E.W."/>
            <person name="Rubin G.M."/>
            <person name="Venter J.C."/>
        </authorList>
    </citation>
    <scope>NUCLEOTIDE SEQUENCE [LARGE SCALE GENOMIC DNA]</scope>
    <source>
        <strain>Berkeley</strain>
    </source>
</reference>
<reference key="2">
    <citation type="journal article" date="2002" name="Genome Biol.">
        <title>Annotation of the Drosophila melanogaster euchromatic genome: a systematic review.</title>
        <authorList>
            <person name="Misra S."/>
            <person name="Crosby M.A."/>
            <person name="Mungall C.J."/>
            <person name="Matthews B.B."/>
            <person name="Campbell K.S."/>
            <person name="Hradecky P."/>
            <person name="Huang Y."/>
            <person name="Kaminker J.S."/>
            <person name="Millburn G.H."/>
            <person name="Prochnik S.E."/>
            <person name="Smith C.D."/>
            <person name="Tupy J.L."/>
            <person name="Whitfield E.J."/>
            <person name="Bayraktaroglu L."/>
            <person name="Berman B.P."/>
            <person name="Bettencourt B.R."/>
            <person name="Celniker S.E."/>
            <person name="de Grey A.D.N.J."/>
            <person name="Drysdale R.A."/>
            <person name="Harris N.L."/>
            <person name="Richter J."/>
            <person name="Russo S."/>
            <person name="Schroeder A.J."/>
            <person name="Shu S.Q."/>
            <person name="Stapleton M."/>
            <person name="Yamada C."/>
            <person name="Ashburner M."/>
            <person name="Gelbart W.M."/>
            <person name="Rubin G.M."/>
            <person name="Lewis S.E."/>
        </authorList>
    </citation>
    <scope>GENOME REANNOTATION</scope>
    <source>
        <strain>Berkeley</strain>
    </source>
</reference>
<reference key="3">
    <citation type="journal article" date="2000" name="Cell">
        <title>An olfactory sensory map in the fly brain.</title>
        <authorList>
            <person name="Vosshall L.B."/>
            <person name="Wong A.M."/>
            <person name="Axel R."/>
        </authorList>
    </citation>
    <scope>TISSUE SPECIFICITY</scope>
</reference>
<reference key="4">
    <citation type="journal article" date="2006" name="Cell">
        <title>Coding of odors by a receptor repertoire.</title>
        <authorList>
            <person name="Hallem E.A."/>
            <person name="Carlson J.R."/>
        </authorList>
    </citation>
    <scope>FUNCTION</scope>
</reference>
<reference key="5">
    <citation type="journal article" date="2010" name="Genetics">
        <title>Odorant receptor polymorphisms and natural variation in olfactory behavior in Drosophila melanogaster.</title>
        <authorList>
            <person name="Rollmann S.M."/>
            <person name="Wang P."/>
            <person name="Date P."/>
            <person name="West S.A."/>
            <person name="Mackay T.F."/>
            <person name="Anholt R.R."/>
        </authorList>
    </citation>
    <scope>FUNCTION</scope>
</reference>
<reference key="6">
    <citation type="journal article" date="2012" name="Chem. Senses">
        <title>Genetic variation in odorant receptors contributes to variation in olfactory behavior in a natural population of Drosophila melanogaster.</title>
        <authorList>
            <person name="Richgels P.K."/>
            <person name="Rollmann S.M."/>
        </authorList>
    </citation>
    <scope>FUNCTION</scope>
</reference>
<name>OR10A_DROME</name>
<feature type="chain" id="PRO_0000174228" description="Odorant receptor 10a">
    <location>
        <begin position="1"/>
        <end position="406"/>
    </location>
</feature>
<feature type="topological domain" description="Cytoplasmic" evidence="2">
    <location>
        <begin position="1"/>
        <end position="45"/>
    </location>
</feature>
<feature type="transmembrane region" description="Helical; Name=1" evidence="2">
    <location>
        <begin position="46"/>
        <end position="66"/>
    </location>
</feature>
<feature type="topological domain" description="Extracellular" evidence="2">
    <location>
        <begin position="67"/>
        <end position="74"/>
    </location>
</feature>
<feature type="transmembrane region" description="Helical; Name=2" evidence="2">
    <location>
        <begin position="75"/>
        <end position="95"/>
    </location>
</feature>
<feature type="topological domain" description="Cytoplasmic" evidence="2">
    <location>
        <begin position="96"/>
        <end position="143"/>
    </location>
</feature>
<feature type="transmembrane region" description="Helical; Name=3" evidence="2">
    <location>
        <begin position="144"/>
        <end position="164"/>
    </location>
</feature>
<feature type="topological domain" description="Extracellular" evidence="2">
    <location>
        <begin position="165"/>
        <end position="189"/>
    </location>
</feature>
<feature type="transmembrane region" description="Helical; Name=4" evidence="2">
    <location>
        <begin position="190"/>
        <end position="210"/>
    </location>
</feature>
<feature type="topological domain" description="Cytoplasmic" evidence="2">
    <location>
        <begin position="211"/>
        <end position="281"/>
    </location>
</feature>
<feature type="transmembrane region" description="Helical; Name=5" evidence="2">
    <location>
        <begin position="282"/>
        <end position="302"/>
    </location>
</feature>
<feature type="topological domain" description="Extracellular" evidence="2">
    <location>
        <begin position="303"/>
        <end position="308"/>
    </location>
</feature>
<feature type="transmembrane region" description="Helical; Name=6" evidence="2">
    <location>
        <begin position="309"/>
        <end position="329"/>
    </location>
</feature>
<feature type="topological domain" description="Cytoplasmic" evidence="2">
    <location>
        <begin position="330"/>
        <end position="372"/>
    </location>
</feature>
<feature type="transmembrane region" description="Helical; Name=7" evidence="2">
    <location>
        <begin position="373"/>
        <end position="393"/>
    </location>
</feature>
<feature type="topological domain" description="Extracellular" evidence="2">
    <location>
        <begin position="394"/>
        <end position="406"/>
    </location>
</feature>
<feature type="glycosylation site" description="N-linked (GlcNAc...) asparagine" evidence="2">
    <location>
        <position position="178"/>
    </location>
</feature>